<reference key="1">
    <citation type="submission" date="2007-02" db="EMBL/GenBank/DDBJ databases">
        <title>Complete sequence of chromosome of Yersinia pestis Pestoides F.</title>
        <authorList>
            <consortium name="US DOE Joint Genome Institute"/>
            <person name="Copeland A."/>
            <person name="Lucas S."/>
            <person name="Lapidus A."/>
            <person name="Barry K."/>
            <person name="Detter J.C."/>
            <person name="Glavina del Rio T."/>
            <person name="Hammon N."/>
            <person name="Israni S."/>
            <person name="Dalin E."/>
            <person name="Tice H."/>
            <person name="Pitluck S."/>
            <person name="Di Bartolo G."/>
            <person name="Chain P."/>
            <person name="Malfatti S."/>
            <person name="Shin M."/>
            <person name="Vergez L."/>
            <person name="Schmutz J."/>
            <person name="Larimer F."/>
            <person name="Land M."/>
            <person name="Hauser L."/>
            <person name="Worsham P."/>
            <person name="Chu M."/>
            <person name="Bearden S."/>
            <person name="Garcia E."/>
            <person name="Richardson P."/>
        </authorList>
    </citation>
    <scope>NUCLEOTIDE SEQUENCE [LARGE SCALE GENOMIC DNA]</scope>
    <source>
        <strain>Pestoides F</strain>
    </source>
</reference>
<comment type="function">
    <text evidence="1">Catalyzes the formation of 5-methyl-uridine at position 747 (m5U747) in 23S rRNA.</text>
</comment>
<comment type="catalytic activity">
    <reaction evidence="1">
        <text>uridine(747) in 23S rRNA + S-adenosyl-L-methionine = 5-methyluridine(747) in 23S rRNA + S-adenosyl-L-homocysteine + H(+)</text>
        <dbReference type="Rhea" id="RHEA:42628"/>
        <dbReference type="Rhea" id="RHEA-COMP:10154"/>
        <dbReference type="Rhea" id="RHEA-COMP:10155"/>
        <dbReference type="ChEBI" id="CHEBI:15378"/>
        <dbReference type="ChEBI" id="CHEBI:57856"/>
        <dbReference type="ChEBI" id="CHEBI:59789"/>
        <dbReference type="ChEBI" id="CHEBI:65315"/>
        <dbReference type="ChEBI" id="CHEBI:74447"/>
        <dbReference type="EC" id="2.1.1.189"/>
    </reaction>
</comment>
<comment type="similarity">
    <text evidence="1">Belongs to the class I-like SAM-binding methyltransferase superfamily. RNA M5U methyltransferase family. RlmC subfamily.</text>
</comment>
<feature type="chain" id="PRO_1000063011" description="23S rRNA (uracil(747)-C(5))-methyltransferase RlmC">
    <location>
        <begin position="1"/>
        <end position="376"/>
    </location>
</feature>
<feature type="active site" description="Nucleophile" evidence="1">
    <location>
        <position position="334"/>
    </location>
</feature>
<feature type="binding site" evidence="1">
    <location>
        <position position="3"/>
    </location>
    <ligand>
        <name>[4Fe-4S] cluster</name>
        <dbReference type="ChEBI" id="CHEBI:49883"/>
    </ligand>
</feature>
<feature type="binding site" evidence="1">
    <location>
        <position position="11"/>
    </location>
    <ligand>
        <name>[4Fe-4S] cluster</name>
        <dbReference type="ChEBI" id="CHEBI:49883"/>
    </ligand>
</feature>
<feature type="binding site" evidence="1">
    <location>
        <position position="14"/>
    </location>
    <ligand>
        <name>[4Fe-4S] cluster</name>
        <dbReference type="ChEBI" id="CHEBI:49883"/>
    </ligand>
</feature>
<feature type="binding site" evidence="1">
    <location>
        <position position="87"/>
    </location>
    <ligand>
        <name>[4Fe-4S] cluster</name>
        <dbReference type="ChEBI" id="CHEBI:49883"/>
    </ligand>
</feature>
<feature type="binding site" evidence="1">
    <location>
        <position position="212"/>
    </location>
    <ligand>
        <name>S-adenosyl-L-methionine</name>
        <dbReference type="ChEBI" id="CHEBI:59789"/>
    </ligand>
</feature>
<feature type="binding site" evidence="1">
    <location>
        <position position="241"/>
    </location>
    <ligand>
        <name>S-adenosyl-L-methionine</name>
        <dbReference type="ChEBI" id="CHEBI:59789"/>
    </ligand>
</feature>
<feature type="binding site" evidence="1">
    <location>
        <position position="262"/>
    </location>
    <ligand>
        <name>S-adenosyl-L-methionine</name>
        <dbReference type="ChEBI" id="CHEBI:59789"/>
    </ligand>
</feature>
<feature type="binding site" evidence="1">
    <location>
        <position position="307"/>
    </location>
    <ligand>
        <name>S-adenosyl-L-methionine</name>
        <dbReference type="ChEBI" id="CHEBI:59789"/>
    </ligand>
</feature>
<sequence>MHCAQYTAGRCRSCQWLDKPYPQQLADKQHHLESLLAGHAVTQWLAPVFGRESAFRNKAKMVVSGSVERPLLGMLHRDGTPVDLCACPLYPPSFEPVFTVLKTFIARAGLTPYNVARKRGELKFLLLTESTYNGELMLRFVLRSETKLAQLIAALPWLQQQLPQLAVISANIQPVHMAILEGEREIPLTEQQALPERFNQVPLYIRPQSFFQTNPQVAASLYATARQWVQEHEVHSMWDLFCGVGGFGLHCAGPETQLTGIEINAEAIACARQSAEQLGLKNVSFAALDSTRFATAEAQIPELVLVNPPRRGIGRELCDYLSQMAPKFILYSSCNAETMAKDISLLAGYHIERVQLFDMFPHTSHYEVLTLLTLRR</sequence>
<evidence type="ECO:0000255" key="1">
    <source>
        <dbReference type="HAMAP-Rule" id="MF_01012"/>
    </source>
</evidence>
<keyword id="KW-0004">4Fe-4S</keyword>
<keyword id="KW-0408">Iron</keyword>
<keyword id="KW-0411">Iron-sulfur</keyword>
<keyword id="KW-0479">Metal-binding</keyword>
<keyword id="KW-0489">Methyltransferase</keyword>
<keyword id="KW-0698">rRNA processing</keyword>
<keyword id="KW-0949">S-adenosyl-L-methionine</keyword>
<keyword id="KW-0808">Transferase</keyword>
<protein>
    <recommendedName>
        <fullName evidence="1">23S rRNA (uracil(747)-C(5))-methyltransferase RlmC</fullName>
        <ecNumber evidence="1">2.1.1.189</ecNumber>
    </recommendedName>
    <alternativeName>
        <fullName evidence="1">23S rRNA(m5U747)-methyltransferase</fullName>
    </alternativeName>
</protein>
<dbReference type="EC" id="2.1.1.189" evidence="1"/>
<dbReference type="EMBL" id="CP000668">
    <property type="protein sequence ID" value="ABP40735.1"/>
    <property type="molecule type" value="Genomic_DNA"/>
</dbReference>
<dbReference type="RefSeq" id="WP_002208756.1">
    <property type="nucleotide sequence ID" value="NZ_CP009715.1"/>
</dbReference>
<dbReference type="SMR" id="A4TN73"/>
<dbReference type="GeneID" id="57977467"/>
<dbReference type="KEGG" id="ypp:YPDSF_2360"/>
<dbReference type="PATRIC" id="fig|386656.14.peg.3858"/>
<dbReference type="GO" id="GO:0051539">
    <property type="term" value="F:4 iron, 4 sulfur cluster binding"/>
    <property type="evidence" value="ECO:0007669"/>
    <property type="project" value="UniProtKB-KW"/>
</dbReference>
<dbReference type="GO" id="GO:0005506">
    <property type="term" value="F:iron ion binding"/>
    <property type="evidence" value="ECO:0007669"/>
    <property type="project" value="UniProtKB-UniRule"/>
</dbReference>
<dbReference type="GO" id="GO:0070041">
    <property type="term" value="F:rRNA (uridine-C5-)-methyltransferase activity"/>
    <property type="evidence" value="ECO:0007669"/>
    <property type="project" value="UniProtKB-UniRule"/>
</dbReference>
<dbReference type="GO" id="GO:0070475">
    <property type="term" value="P:rRNA base methylation"/>
    <property type="evidence" value="ECO:0007669"/>
    <property type="project" value="TreeGrafter"/>
</dbReference>
<dbReference type="CDD" id="cd02440">
    <property type="entry name" value="AdoMet_MTases"/>
    <property type="match status" value="1"/>
</dbReference>
<dbReference type="FunFam" id="2.40.50.1070:FF:000002">
    <property type="entry name" value="23S rRNA (uracil(747)-C(5))-methyltransferase RlmC"/>
    <property type="match status" value="1"/>
</dbReference>
<dbReference type="Gene3D" id="2.40.50.1070">
    <property type="match status" value="1"/>
</dbReference>
<dbReference type="Gene3D" id="3.40.50.150">
    <property type="entry name" value="Vaccinia Virus protein VP39"/>
    <property type="match status" value="1"/>
</dbReference>
<dbReference type="HAMAP" id="MF_01012">
    <property type="entry name" value="23SrRNA_methyltr_RlmC"/>
    <property type="match status" value="1"/>
</dbReference>
<dbReference type="InterPro" id="IPR011825">
    <property type="entry name" value="23SrRNA_MeTrfase_RlmC"/>
</dbReference>
<dbReference type="InterPro" id="IPR030390">
    <property type="entry name" value="MeTrfase_TrmA_AS"/>
</dbReference>
<dbReference type="InterPro" id="IPR030391">
    <property type="entry name" value="MeTrfase_TrmA_CS"/>
</dbReference>
<dbReference type="InterPro" id="IPR029063">
    <property type="entry name" value="SAM-dependent_MTases_sf"/>
</dbReference>
<dbReference type="InterPro" id="IPR010280">
    <property type="entry name" value="U5_MeTrfase_fam"/>
</dbReference>
<dbReference type="NCBIfam" id="TIGR02085">
    <property type="entry name" value="meth_trns_rumB"/>
    <property type="match status" value="1"/>
</dbReference>
<dbReference type="NCBIfam" id="TIGR00479">
    <property type="entry name" value="rumA"/>
    <property type="match status" value="1"/>
</dbReference>
<dbReference type="PANTHER" id="PTHR11061">
    <property type="entry name" value="RNA M5U METHYLTRANSFERASE"/>
    <property type="match status" value="1"/>
</dbReference>
<dbReference type="PANTHER" id="PTHR11061:SF30">
    <property type="entry name" value="TRNA (URACIL(54)-C(5))-METHYLTRANSFERASE"/>
    <property type="match status" value="1"/>
</dbReference>
<dbReference type="Pfam" id="PF05958">
    <property type="entry name" value="tRNA_U5-meth_tr"/>
    <property type="match status" value="1"/>
</dbReference>
<dbReference type="SUPFAM" id="SSF53335">
    <property type="entry name" value="S-adenosyl-L-methionine-dependent methyltransferases"/>
    <property type="match status" value="1"/>
</dbReference>
<dbReference type="PROSITE" id="PS51687">
    <property type="entry name" value="SAM_MT_RNA_M5U"/>
    <property type="match status" value="1"/>
</dbReference>
<dbReference type="PROSITE" id="PS01230">
    <property type="entry name" value="TRMA_1"/>
    <property type="match status" value="1"/>
</dbReference>
<dbReference type="PROSITE" id="PS01231">
    <property type="entry name" value="TRMA_2"/>
    <property type="match status" value="1"/>
</dbReference>
<name>RLMC_YERPP</name>
<gene>
    <name evidence="1" type="primary">rlmC</name>
    <name type="synonym">rumB</name>
    <name type="ordered locus">YPDSF_2360</name>
</gene>
<organism>
    <name type="scientific">Yersinia pestis (strain Pestoides F)</name>
    <dbReference type="NCBI Taxonomy" id="386656"/>
    <lineage>
        <taxon>Bacteria</taxon>
        <taxon>Pseudomonadati</taxon>
        <taxon>Pseudomonadota</taxon>
        <taxon>Gammaproteobacteria</taxon>
        <taxon>Enterobacterales</taxon>
        <taxon>Yersiniaceae</taxon>
        <taxon>Yersinia</taxon>
    </lineage>
</organism>
<accession>A4TN73</accession>
<proteinExistence type="inferred from homology"/>